<feature type="chain" id="PRO_1000004036" description="Small ribosomal subunit protein uS2">
    <location>
        <begin position="1"/>
        <end position="245"/>
    </location>
</feature>
<protein>
    <recommendedName>
        <fullName evidence="1">Small ribosomal subunit protein uS2</fullName>
    </recommendedName>
    <alternativeName>
        <fullName evidence="2">30S ribosomal protein S2</fullName>
    </alternativeName>
</protein>
<gene>
    <name evidence="1" type="primary">rpsB</name>
    <name type="ordered locus">Pfl01_1101</name>
</gene>
<comment type="similarity">
    <text evidence="1">Belongs to the universal ribosomal protein uS2 family.</text>
</comment>
<accession>Q3KHB2</accession>
<keyword id="KW-0687">Ribonucleoprotein</keyword>
<keyword id="KW-0689">Ribosomal protein</keyword>
<proteinExistence type="inferred from homology"/>
<dbReference type="EMBL" id="CP000094">
    <property type="protein sequence ID" value="ABA72844.1"/>
    <property type="molecule type" value="Genomic_DNA"/>
</dbReference>
<dbReference type="RefSeq" id="WP_008052780.1">
    <property type="nucleotide sequence ID" value="NC_007492.2"/>
</dbReference>
<dbReference type="SMR" id="Q3KHB2"/>
<dbReference type="KEGG" id="pfo:Pfl01_1101"/>
<dbReference type="eggNOG" id="COG0052">
    <property type="taxonomic scope" value="Bacteria"/>
</dbReference>
<dbReference type="HOGENOM" id="CLU_040318_1_2_6"/>
<dbReference type="Proteomes" id="UP000002704">
    <property type="component" value="Chromosome"/>
</dbReference>
<dbReference type="GO" id="GO:0022627">
    <property type="term" value="C:cytosolic small ribosomal subunit"/>
    <property type="evidence" value="ECO:0007669"/>
    <property type="project" value="TreeGrafter"/>
</dbReference>
<dbReference type="GO" id="GO:0003735">
    <property type="term" value="F:structural constituent of ribosome"/>
    <property type="evidence" value="ECO:0007669"/>
    <property type="project" value="InterPro"/>
</dbReference>
<dbReference type="GO" id="GO:0006412">
    <property type="term" value="P:translation"/>
    <property type="evidence" value="ECO:0007669"/>
    <property type="project" value="UniProtKB-UniRule"/>
</dbReference>
<dbReference type="CDD" id="cd01425">
    <property type="entry name" value="RPS2"/>
    <property type="match status" value="1"/>
</dbReference>
<dbReference type="FunFam" id="1.10.287.610:FF:000001">
    <property type="entry name" value="30S ribosomal protein S2"/>
    <property type="match status" value="1"/>
</dbReference>
<dbReference type="Gene3D" id="3.40.50.10490">
    <property type="entry name" value="Glucose-6-phosphate isomerase like protein, domain 1"/>
    <property type="match status" value="1"/>
</dbReference>
<dbReference type="Gene3D" id="1.10.287.610">
    <property type="entry name" value="Helix hairpin bin"/>
    <property type="match status" value="1"/>
</dbReference>
<dbReference type="HAMAP" id="MF_00291_B">
    <property type="entry name" value="Ribosomal_uS2_B"/>
    <property type="match status" value="1"/>
</dbReference>
<dbReference type="InterPro" id="IPR001865">
    <property type="entry name" value="Ribosomal_uS2"/>
</dbReference>
<dbReference type="InterPro" id="IPR005706">
    <property type="entry name" value="Ribosomal_uS2_bac/mit/plastid"/>
</dbReference>
<dbReference type="InterPro" id="IPR018130">
    <property type="entry name" value="Ribosomal_uS2_CS"/>
</dbReference>
<dbReference type="InterPro" id="IPR023591">
    <property type="entry name" value="Ribosomal_uS2_flav_dom_sf"/>
</dbReference>
<dbReference type="NCBIfam" id="TIGR01011">
    <property type="entry name" value="rpsB_bact"/>
    <property type="match status" value="1"/>
</dbReference>
<dbReference type="PANTHER" id="PTHR12534">
    <property type="entry name" value="30S RIBOSOMAL PROTEIN S2 PROKARYOTIC AND ORGANELLAR"/>
    <property type="match status" value="1"/>
</dbReference>
<dbReference type="PANTHER" id="PTHR12534:SF0">
    <property type="entry name" value="SMALL RIBOSOMAL SUBUNIT PROTEIN US2M"/>
    <property type="match status" value="1"/>
</dbReference>
<dbReference type="Pfam" id="PF00318">
    <property type="entry name" value="Ribosomal_S2"/>
    <property type="match status" value="1"/>
</dbReference>
<dbReference type="PRINTS" id="PR00395">
    <property type="entry name" value="RIBOSOMALS2"/>
</dbReference>
<dbReference type="SUPFAM" id="SSF52313">
    <property type="entry name" value="Ribosomal protein S2"/>
    <property type="match status" value="1"/>
</dbReference>
<dbReference type="PROSITE" id="PS00962">
    <property type="entry name" value="RIBOSOMAL_S2_1"/>
    <property type="match status" value="1"/>
</dbReference>
<dbReference type="PROSITE" id="PS00963">
    <property type="entry name" value="RIBOSOMAL_S2_2"/>
    <property type="match status" value="1"/>
</dbReference>
<reference key="1">
    <citation type="journal article" date="2009" name="Genome Biol.">
        <title>Genomic and genetic analyses of diversity and plant interactions of Pseudomonas fluorescens.</title>
        <authorList>
            <person name="Silby M.W."/>
            <person name="Cerdeno-Tarraga A.M."/>
            <person name="Vernikos G.S."/>
            <person name="Giddens S.R."/>
            <person name="Jackson R.W."/>
            <person name="Preston G.M."/>
            <person name="Zhang X.-X."/>
            <person name="Moon C.D."/>
            <person name="Gehrig S.M."/>
            <person name="Godfrey S.A.C."/>
            <person name="Knight C.G."/>
            <person name="Malone J.G."/>
            <person name="Robinson Z."/>
            <person name="Spiers A.J."/>
            <person name="Harris S."/>
            <person name="Challis G.L."/>
            <person name="Yaxley A.M."/>
            <person name="Harris D."/>
            <person name="Seeger K."/>
            <person name="Murphy L."/>
            <person name="Rutter S."/>
            <person name="Squares R."/>
            <person name="Quail M.A."/>
            <person name="Saunders E."/>
            <person name="Mavromatis K."/>
            <person name="Brettin T.S."/>
            <person name="Bentley S.D."/>
            <person name="Hothersall J."/>
            <person name="Stephens E."/>
            <person name="Thomas C.M."/>
            <person name="Parkhill J."/>
            <person name="Levy S.B."/>
            <person name="Rainey P.B."/>
            <person name="Thomson N.R."/>
        </authorList>
    </citation>
    <scope>NUCLEOTIDE SEQUENCE [LARGE SCALE GENOMIC DNA]</scope>
    <source>
        <strain>Pf0-1</strain>
    </source>
</reference>
<evidence type="ECO:0000255" key="1">
    <source>
        <dbReference type="HAMAP-Rule" id="MF_00291"/>
    </source>
</evidence>
<evidence type="ECO:0000305" key="2"/>
<name>RS2_PSEPF</name>
<organism>
    <name type="scientific">Pseudomonas fluorescens (strain Pf0-1)</name>
    <dbReference type="NCBI Taxonomy" id="205922"/>
    <lineage>
        <taxon>Bacteria</taxon>
        <taxon>Pseudomonadati</taxon>
        <taxon>Pseudomonadota</taxon>
        <taxon>Gammaproteobacteria</taxon>
        <taxon>Pseudomonadales</taxon>
        <taxon>Pseudomonadaceae</taxon>
        <taxon>Pseudomonas</taxon>
    </lineage>
</organism>
<sequence>MSQVNMRDMLKAGVHFGHQTRYWNPKMGKYIFGARNKIHIINLEKTLPMFNEALTFVERLAQGKNKILFVGTKRSAGKIVAEEAARCGSPYVDHRWLGGMLTNFKTIRASIKRLRDLEVQAEDGTFAKLTKKEALMRTRDLEKLDRSLGGIKDMGGLPDALFVIDVDHERIAITEANKLGIPVIGVVDTNSSPEGVDYIIPGNDDAIRAIQLYMGSMADAVIRGRNNVAGGTVEFAAEETQAAAE</sequence>